<dbReference type="EMBL" id="X61383">
    <property type="protein sequence ID" value="CAA43656.1"/>
    <property type="molecule type" value="Genomic_DNA"/>
</dbReference>
<dbReference type="EMBL" id="X56018">
    <property type="protein sequence ID" value="CAA39495.1"/>
    <property type="molecule type" value="Genomic_DNA"/>
</dbReference>
<dbReference type="EMBL" id="AE003852">
    <property type="status" value="NOT_ANNOTATED_CDS"/>
    <property type="molecule type" value="Genomic_DNA"/>
</dbReference>
<dbReference type="PIR" id="S21944">
    <property type="entry name" value="S21944"/>
</dbReference>
<dbReference type="SMR" id="P24550"/>
<dbReference type="Proteomes" id="UP000000584">
    <property type="component" value="Chromosome 1"/>
</dbReference>
<dbReference type="Gene3D" id="3.40.50.720">
    <property type="entry name" value="NAD(P)-binding Rossmann-like Domain"/>
    <property type="match status" value="1"/>
</dbReference>
<dbReference type="InterPro" id="IPR001509">
    <property type="entry name" value="Epimerase_deHydtase"/>
</dbReference>
<dbReference type="InterPro" id="IPR036291">
    <property type="entry name" value="NAD(P)-bd_dom_sf"/>
</dbReference>
<dbReference type="PANTHER" id="PTHR11092:SF0">
    <property type="entry name" value="EPIMERASE FAMILY PROTEIN SDR39U1"/>
    <property type="match status" value="1"/>
</dbReference>
<dbReference type="PANTHER" id="PTHR11092">
    <property type="entry name" value="SUGAR NUCLEOTIDE EPIMERASE RELATED"/>
    <property type="match status" value="1"/>
</dbReference>
<dbReference type="Pfam" id="PF01370">
    <property type="entry name" value="Epimerase"/>
    <property type="match status" value="1"/>
</dbReference>
<dbReference type="SUPFAM" id="SSF51735">
    <property type="entry name" value="NAD(P)-binding Rossmann-fold domains"/>
    <property type="match status" value="1"/>
</dbReference>
<accession>P24550</accession>
<sequence length="205" mass="22831">MPAYNPSARFDKAPFHSSLFQYCVIPKRLGVSGRRQVRNHMSIDNYVIGDQVELHEATSSKVKKVSSNHRTRFTQGVTMRILITGGTGFVGFQLIKLLSSHELLVLTRDLTKAAQRFAHIPSQNLQLLSPLDELSDFNGIDAIINLRPDNRLPINAEEKPKAGIARSRLDITEQLVEKIRASAHPPAVFLSGSAWFLCDQQAACL</sequence>
<reference key="1">
    <citation type="journal article" date="1992" name="J. Bacteriol.">
        <title>A 14-kilodalton inner membrane protein of Vibrio cholerae biotype el tor confers resistance to group IV choleraphage infection to classical vibrios.</title>
        <authorList>
            <person name="Biswas S.K."/>
            <person name="Chowdhury R."/>
            <person name="Das J."/>
        </authorList>
    </citation>
    <scope>NUCLEOTIDE SEQUENCE [GENOMIC DNA]</scope>
    <source>
        <strain>ATCC 51352 / El Tor MAK757 / Serotype O1</strain>
    </source>
</reference>
<reference key="2">
    <citation type="journal article" date="2000" name="Nature">
        <title>DNA sequence of both chromosomes of the cholera pathogen Vibrio cholerae.</title>
        <authorList>
            <person name="Heidelberg J.F."/>
            <person name="Eisen J.A."/>
            <person name="Nelson W.C."/>
            <person name="Clayton R.A."/>
            <person name="Gwinn M.L."/>
            <person name="Dodson R.J."/>
            <person name="Haft D.H."/>
            <person name="Hickey E.K."/>
            <person name="Peterson J.D."/>
            <person name="Umayam L.A."/>
            <person name="Gill S.R."/>
            <person name="Nelson K.E."/>
            <person name="Read T.D."/>
            <person name="Tettelin H."/>
            <person name="Richardson D.L."/>
            <person name="Ermolaeva M.D."/>
            <person name="Vamathevan J.J."/>
            <person name="Bass S."/>
            <person name="Qin H."/>
            <person name="Dragoi I."/>
            <person name="Sellers P."/>
            <person name="McDonald L.A."/>
            <person name="Utterback T.R."/>
            <person name="Fleischmann R.D."/>
            <person name="Nierman W.C."/>
            <person name="White O."/>
            <person name="Salzberg S.L."/>
            <person name="Smith H.O."/>
            <person name="Colwell R.R."/>
            <person name="Mekalanos J.J."/>
            <person name="Venter J.C."/>
            <person name="Fraser C.M."/>
        </authorList>
    </citation>
    <scope>NUCLEOTIDE SEQUENCE [LARGE SCALE GENOMIC DNA]</scope>
    <source>
        <strain>ATCC 39315 / El Tor Inaba N16961</strain>
    </source>
</reference>
<evidence type="ECO:0000305" key="1"/>
<gene>
    <name type="primary">rcp</name>
    <name type="synonym">sulA</name>
    <name type="ordered locus">VC_0980</name>
</gene>
<name>RCP_VIBCH</name>
<feature type="chain" id="PRO_0000097204" description="Protein Rcp">
    <location>
        <begin position="1"/>
        <end position="205"/>
    </location>
</feature>
<proteinExistence type="inferred from homology"/>
<keyword id="KW-1185">Reference proteome</keyword>
<protein>
    <recommendedName>
        <fullName>Protein Rcp</fullName>
    </recommendedName>
    <alternativeName>
        <fullName>Protein SulA</fullName>
    </alternativeName>
</protein>
<comment type="similarity">
    <text evidence="1">Belongs to the NAD(P)-dependent epimerase/dehydratase family.</text>
</comment>
<comment type="sequence caution" evidence="1">
    <conflict type="frameshift">
        <sequence resource="EMBL" id="AE003852"/>
    </conflict>
    <text>These frameshifts are annotated as authentic frameshifts and it remains therefore to prove if rcp exists in some strains of Vibrio cholerae such as MAK757.</text>
</comment>
<organism>
    <name type="scientific">Vibrio cholerae serotype O1 (strain ATCC 39315 / El Tor Inaba N16961)</name>
    <dbReference type="NCBI Taxonomy" id="243277"/>
    <lineage>
        <taxon>Bacteria</taxon>
        <taxon>Pseudomonadati</taxon>
        <taxon>Pseudomonadota</taxon>
        <taxon>Gammaproteobacteria</taxon>
        <taxon>Vibrionales</taxon>
        <taxon>Vibrionaceae</taxon>
        <taxon>Vibrio</taxon>
    </lineage>
</organism>